<keyword id="KW-0328">Glycosyltransferase</keyword>
<keyword id="KW-0479">Metal-binding</keyword>
<keyword id="KW-0671">Queuosine biosynthesis</keyword>
<keyword id="KW-1185">Reference proteome</keyword>
<keyword id="KW-0808">Transferase</keyword>
<keyword id="KW-0819">tRNA processing</keyword>
<keyword id="KW-0862">Zinc</keyword>
<organism>
    <name type="scientific">Chlamydia trachomatis serovar D (strain ATCC VR-885 / DSM 19411 / UW-3/Cx)</name>
    <dbReference type="NCBI Taxonomy" id="272561"/>
    <lineage>
        <taxon>Bacteria</taxon>
        <taxon>Pseudomonadati</taxon>
        <taxon>Chlamydiota</taxon>
        <taxon>Chlamydiia</taxon>
        <taxon>Chlamydiales</taxon>
        <taxon>Chlamydiaceae</taxon>
        <taxon>Chlamydia/Chlamydophila group</taxon>
        <taxon>Chlamydia</taxon>
    </lineage>
</organism>
<accession>O84196</accession>
<name>TGT_CHLTR</name>
<reference key="1">
    <citation type="journal article" date="1998" name="Science">
        <title>Genome sequence of an obligate intracellular pathogen of humans: Chlamydia trachomatis.</title>
        <authorList>
            <person name="Stephens R.S."/>
            <person name="Kalman S."/>
            <person name="Lammel C.J."/>
            <person name="Fan J."/>
            <person name="Marathe R."/>
            <person name="Aravind L."/>
            <person name="Mitchell W.P."/>
            <person name="Olinger L."/>
            <person name="Tatusov R.L."/>
            <person name="Zhao Q."/>
            <person name="Koonin E.V."/>
            <person name="Davis R.W."/>
        </authorList>
    </citation>
    <scope>NUCLEOTIDE SEQUENCE [LARGE SCALE GENOMIC DNA]</scope>
    <source>
        <strain>ATCC VR-885 / DSM 19411 / UW-3/Cx</strain>
    </source>
</reference>
<dbReference type="EC" id="2.4.2.29" evidence="1"/>
<dbReference type="EMBL" id="AE001273">
    <property type="protein sequence ID" value="AAC67785.1"/>
    <property type="molecule type" value="Genomic_DNA"/>
</dbReference>
<dbReference type="PIR" id="E71544">
    <property type="entry name" value="E71544"/>
</dbReference>
<dbReference type="RefSeq" id="NP_219697.1">
    <property type="nucleotide sequence ID" value="NC_000117.1"/>
</dbReference>
<dbReference type="RefSeq" id="WP_009873629.1">
    <property type="nucleotide sequence ID" value="NC_000117.1"/>
</dbReference>
<dbReference type="SMR" id="O84196"/>
<dbReference type="FunCoup" id="O84196">
    <property type="interactions" value="259"/>
</dbReference>
<dbReference type="STRING" id="272561.CT_193"/>
<dbReference type="EnsemblBacteria" id="AAC67785">
    <property type="protein sequence ID" value="AAC67785"/>
    <property type="gene ID" value="CT_193"/>
</dbReference>
<dbReference type="GeneID" id="884936"/>
<dbReference type="KEGG" id="ctr:CT_193"/>
<dbReference type="PATRIC" id="fig|272561.5.peg.207"/>
<dbReference type="HOGENOM" id="CLU_022060_0_2_0"/>
<dbReference type="InParanoid" id="O84196"/>
<dbReference type="OrthoDB" id="9805417at2"/>
<dbReference type="BioCyc" id="MetaCyc:MONOMER-21021"/>
<dbReference type="UniPathway" id="UPA00392"/>
<dbReference type="Proteomes" id="UP000000431">
    <property type="component" value="Chromosome"/>
</dbReference>
<dbReference type="GO" id="GO:0046872">
    <property type="term" value="F:metal ion binding"/>
    <property type="evidence" value="ECO:0007669"/>
    <property type="project" value="UniProtKB-KW"/>
</dbReference>
<dbReference type="GO" id="GO:0008479">
    <property type="term" value="F:tRNA-guanosine(34) queuine transglycosylase activity"/>
    <property type="evidence" value="ECO:0007669"/>
    <property type="project" value="UniProtKB-UniRule"/>
</dbReference>
<dbReference type="GO" id="GO:0008616">
    <property type="term" value="P:queuosine biosynthetic process"/>
    <property type="evidence" value="ECO:0007669"/>
    <property type="project" value="UniProtKB-UniRule"/>
</dbReference>
<dbReference type="GO" id="GO:0101030">
    <property type="term" value="P:tRNA-guanine transglycosylation"/>
    <property type="evidence" value="ECO:0007669"/>
    <property type="project" value="InterPro"/>
</dbReference>
<dbReference type="Gene3D" id="3.20.20.105">
    <property type="entry name" value="Queuine tRNA-ribosyltransferase-like"/>
    <property type="match status" value="1"/>
</dbReference>
<dbReference type="HAMAP" id="MF_00168">
    <property type="entry name" value="Q_tRNA_Tgt"/>
    <property type="match status" value="1"/>
</dbReference>
<dbReference type="InterPro" id="IPR004803">
    <property type="entry name" value="TGT"/>
</dbReference>
<dbReference type="InterPro" id="IPR036511">
    <property type="entry name" value="TGT-like_sf"/>
</dbReference>
<dbReference type="InterPro" id="IPR002616">
    <property type="entry name" value="tRNA_ribo_trans-like"/>
</dbReference>
<dbReference type="NCBIfam" id="TIGR00430">
    <property type="entry name" value="Q_tRNA_tgt"/>
    <property type="match status" value="1"/>
</dbReference>
<dbReference type="NCBIfam" id="TIGR00449">
    <property type="entry name" value="tgt_general"/>
    <property type="match status" value="1"/>
</dbReference>
<dbReference type="PANTHER" id="PTHR43468">
    <property type="match status" value="1"/>
</dbReference>
<dbReference type="PANTHER" id="PTHR43468:SF1">
    <property type="entry name" value="TRNA-GUANOSINE(34) QUEUINE TRANSGLYCOSYLASE"/>
    <property type="match status" value="1"/>
</dbReference>
<dbReference type="Pfam" id="PF01702">
    <property type="entry name" value="TGT"/>
    <property type="match status" value="1"/>
</dbReference>
<dbReference type="SUPFAM" id="SSF51713">
    <property type="entry name" value="tRNA-guanine transglycosylase"/>
    <property type="match status" value="1"/>
</dbReference>
<gene>
    <name evidence="1" type="primary">tgt</name>
    <name type="ordered locus">CT_193</name>
</gene>
<sequence>MALRFEILHQSKKSRARVGRIETAHGYIDTPAFVPVATNGALKGVLDHSNIPLMFCNTYHLIVHPGAEAIAAMGGLHQFIGRNAPIITDSGGFQIFSLAYGSVAEEIKSCGKKKGGNTIIKVNDDGVHFKSYRDGRKLFLSPEISVQAQKDLGADIILPLDELLPFHADPTYFHQSSQRTYVWEKRSLDYHLKNPGIQSMYGVIHGGTFPDQRKLGCKFVEDLPFDGSAIGGSLGKNLQDIVEVVGVTAANLSAERPRHLLGIGDLPSIWATVGFGIDSFDSSYPTKAARHGMILTSQGPLKINNQRYSSDLNPIEPGCSCLACSQGITRAYLRHLFKVHEPNAGIWASIHNMHHMQKVMREIREGILNDRI</sequence>
<evidence type="ECO:0000255" key="1">
    <source>
        <dbReference type="HAMAP-Rule" id="MF_00168"/>
    </source>
</evidence>
<feature type="chain" id="PRO_0000135466" description="Queuine tRNA-ribosyltransferase">
    <location>
        <begin position="1"/>
        <end position="372"/>
    </location>
</feature>
<feature type="region of interest" description="RNA binding" evidence="1">
    <location>
        <begin position="262"/>
        <end position="268"/>
    </location>
</feature>
<feature type="region of interest" description="RNA binding; important for wobble base 34 recognition" evidence="1">
    <location>
        <begin position="286"/>
        <end position="290"/>
    </location>
</feature>
<feature type="active site" description="Proton acceptor" evidence="1">
    <location>
        <position position="89"/>
    </location>
</feature>
<feature type="active site" description="Nucleophile" evidence="1">
    <location>
        <position position="281"/>
    </location>
</feature>
<feature type="binding site" evidence="1">
    <location>
        <begin position="89"/>
        <end position="93"/>
    </location>
    <ligand>
        <name>substrate</name>
    </ligand>
</feature>
<feature type="binding site" evidence="1">
    <location>
        <position position="161"/>
    </location>
    <ligand>
        <name>substrate</name>
    </ligand>
</feature>
<feature type="binding site" evidence="1">
    <location>
        <position position="232"/>
    </location>
    <ligand>
        <name>substrate</name>
    </ligand>
</feature>
<feature type="binding site" evidence="1">
    <location>
        <position position="319"/>
    </location>
    <ligand>
        <name>Zn(2+)</name>
        <dbReference type="ChEBI" id="CHEBI:29105"/>
    </ligand>
</feature>
<feature type="binding site" evidence="1">
    <location>
        <position position="321"/>
    </location>
    <ligand>
        <name>Zn(2+)</name>
        <dbReference type="ChEBI" id="CHEBI:29105"/>
    </ligand>
</feature>
<feature type="binding site" evidence="1">
    <location>
        <position position="324"/>
    </location>
    <ligand>
        <name>Zn(2+)</name>
        <dbReference type="ChEBI" id="CHEBI:29105"/>
    </ligand>
</feature>
<feature type="binding site" evidence="1">
    <location>
        <position position="351"/>
    </location>
    <ligand>
        <name>Zn(2+)</name>
        <dbReference type="ChEBI" id="CHEBI:29105"/>
    </ligand>
</feature>
<proteinExistence type="inferred from homology"/>
<comment type="function">
    <text evidence="1">Catalyzes the base-exchange of a guanine (G) residue with the queuine precursor 7-aminomethyl-7-deazaguanine (PreQ1) at position 34 (anticodon wobble position) in tRNAs with GU(N) anticodons (tRNA-Asp, -Asn, -His and -Tyr). Catalysis occurs through a double-displacement mechanism. The nucleophile active site attacks the C1' of nucleotide 34 to detach the guanine base from the RNA, forming a covalent enzyme-RNA intermediate. The proton acceptor active site deprotonates the incoming PreQ1, allowing a nucleophilic attack on the C1' of the ribose to form the product. After dissociation, two additional enzymatic reactions on the tRNA convert PreQ1 to queuine (Q), resulting in the hypermodified nucleoside queuosine (7-(((4,5-cis-dihydroxy-2-cyclopenten-1-yl)amino)methyl)-7-deazaguanosine).</text>
</comment>
<comment type="catalytic activity">
    <reaction evidence="1">
        <text>7-aminomethyl-7-carbaguanine + guanosine(34) in tRNA = 7-aminomethyl-7-carbaguanosine(34) in tRNA + guanine</text>
        <dbReference type="Rhea" id="RHEA:24104"/>
        <dbReference type="Rhea" id="RHEA-COMP:10341"/>
        <dbReference type="Rhea" id="RHEA-COMP:10342"/>
        <dbReference type="ChEBI" id="CHEBI:16235"/>
        <dbReference type="ChEBI" id="CHEBI:58703"/>
        <dbReference type="ChEBI" id="CHEBI:74269"/>
        <dbReference type="ChEBI" id="CHEBI:82833"/>
        <dbReference type="EC" id="2.4.2.29"/>
    </reaction>
</comment>
<comment type="cofactor">
    <cofactor evidence="1">
        <name>Zn(2+)</name>
        <dbReference type="ChEBI" id="CHEBI:29105"/>
    </cofactor>
    <text evidence="1">Binds 1 zinc ion per subunit.</text>
</comment>
<comment type="pathway">
    <text evidence="1">tRNA modification; tRNA-queuosine biosynthesis.</text>
</comment>
<comment type="subunit">
    <text evidence="1">Homodimer. Within each dimer, one monomer is responsible for RNA recognition and catalysis, while the other monomer binds to the replacement base PreQ1.</text>
</comment>
<comment type="similarity">
    <text evidence="1">Belongs to the queuine tRNA-ribosyltransferase family.</text>
</comment>
<protein>
    <recommendedName>
        <fullName evidence="1">Queuine tRNA-ribosyltransferase</fullName>
        <ecNumber evidence="1">2.4.2.29</ecNumber>
    </recommendedName>
    <alternativeName>
        <fullName evidence="1">Guanine insertion enzyme</fullName>
    </alternativeName>
    <alternativeName>
        <fullName evidence="1">tRNA-guanine transglycosylase</fullName>
    </alternativeName>
</protein>